<keyword id="KW-0934">Plastid</keyword>
<feature type="chain" id="PRO_0000217492" description="Uncharacterized 15.0 kDa protein in rpl12-rps7 intergenic region">
    <location>
        <begin position="1"/>
        <end position="122"/>
    </location>
</feature>
<protein>
    <recommendedName>
        <fullName>Uncharacterized 15.0 kDa protein in rpl12-rps7 intergenic region</fullName>
    </recommendedName>
    <alternativeName>
        <fullName>ORF122</fullName>
    </alternativeName>
</protein>
<organism>
    <name type="scientific">Euglena longa</name>
    <name type="common">Euglenophycean alga</name>
    <name type="synonym">Astasia longa</name>
    <dbReference type="NCBI Taxonomy" id="3037"/>
    <lineage>
        <taxon>Eukaryota</taxon>
        <taxon>Discoba</taxon>
        <taxon>Euglenozoa</taxon>
        <taxon>Euglenida</taxon>
        <taxon>Spirocuta</taxon>
        <taxon>Euglenophyceae</taxon>
        <taxon>Euglenales</taxon>
        <taxon>Euglenaceae</taxon>
        <taxon>Euglena</taxon>
    </lineage>
</organism>
<sequence length="122" mass="14984">MMNINSSFNNDGTQDPKKDLILSNSNENEYDYIIKLIYENLYNICFSINFVLKKIYLDKFVYKYLPYIEIFLKMNKEKCCCRLKKFFEKDKIKLYKIYHKFKNFLTLNFSNSFTYMIKINIY</sequence>
<dbReference type="EMBL" id="AJ294725">
    <property type="protein sequence ID" value="CAC24605.1"/>
    <property type="molecule type" value="Genomic_DNA"/>
</dbReference>
<dbReference type="RefSeq" id="NP_074994.1">
    <property type="nucleotide sequence ID" value="NC_002652.1"/>
</dbReference>
<dbReference type="GeneID" id="1457317"/>
<dbReference type="GO" id="GO:0009536">
    <property type="term" value="C:plastid"/>
    <property type="evidence" value="ECO:0007669"/>
    <property type="project" value="UniProtKB-SubCell"/>
</dbReference>
<proteinExistence type="predicted"/>
<geneLocation type="non-photosynthetic plastid"/>
<name>YCX9_EUGLO</name>
<reference key="1">
    <citation type="journal article" date="2000" name="Protist">
        <title>Complete gene map of the plastid genome of the nonphotosynthetic euglenoid flagellate Astasia longa.</title>
        <authorList>
            <person name="Gockel G."/>
            <person name="Hachtel W."/>
        </authorList>
    </citation>
    <scope>NUCLEOTIDE SEQUENCE [LARGE SCALE GENOMIC DNA]</scope>
    <source>
        <strain>CCAP 1204-17a</strain>
    </source>
</reference>
<comment type="subcellular location">
    <subcellularLocation>
        <location>Plastid</location>
    </subcellularLocation>
</comment>
<accession>P58148</accession>